<evidence type="ECO:0000250" key="1"/>
<evidence type="ECO:0000255" key="2"/>
<evidence type="ECO:0000269" key="3">
    <source>
    </source>
</evidence>
<evidence type="ECO:0000269" key="4">
    <source>
    </source>
</evidence>
<evidence type="ECO:0000269" key="5">
    <source>
    </source>
</evidence>
<evidence type="ECO:0000305" key="6"/>
<evidence type="ECO:0007829" key="7">
    <source>
        <dbReference type="PDB" id="2RKQ"/>
    </source>
</evidence>
<sequence>MTWIGLLIVGLTAIAVQGEVPIVTRAEWNAKPPNGAIDSMETPLPRAVIAHTAGGACADDVTCSQHMQNLQNFQMSKQKFSDIGYHYLIGGNGKVYEGRSPSQRGAFAGPNNDGSLGIAFIGNFEERAPNKEALDAAKELLEQAVKQAQLVEGYKLLGHRQVSATKSPGEALYALIQQWPNWSEEM</sequence>
<accession>Q9VS97</accession>
<accession>Q70PS3</accession>
<accession>Q70PS6</accession>
<accession>Q70PS9</accession>
<keyword id="KW-0002">3D-structure</keyword>
<keyword id="KW-1015">Disulfide bond</keyword>
<keyword id="KW-0325">Glycoprotein</keyword>
<keyword id="KW-0391">Immunity</keyword>
<keyword id="KW-0399">Innate immunity</keyword>
<keyword id="KW-1185">Reference proteome</keyword>
<keyword id="KW-0964">Secreted</keyword>
<keyword id="KW-0732">Signal</keyword>
<dbReference type="EMBL" id="AJ556623">
    <property type="protein sequence ID" value="CAD89188.1"/>
    <property type="molecule type" value="Genomic_DNA"/>
</dbReference>
<dbReference type="EMBL" id="AJ556624">
    <property type="protein sequence ID" value="CAD89189.1"/>
    <property type="molecule type" value="Genomic_DNA"/>
</dbReference>
<dbReference type="EMBL" id="AJ556625">
    <property type="protein sequence ID" value="CAD89190.1"/>
    <property type="molecule type" value="Genomic_DNA"/>
</dbReference>
<dbReference type="EMBL" id="AJ556626">
    <property type="protein sequence ID" value="CAD89191.1"/>
    <property type="molecule type" value="Genomic_DNA"/>
</dbReference>
<dbReference type="EMBL" id="AJ556627">
    <property type="protein sequence ID" value="CAD89192.1"/>
    <property type="molecule type" value="Genomic_DNA"/>
</dbReference>
<dbReference type="EMBL" id="AJ556628">
    <property type="protein sequence ID" value="CAD89193.1"/>
    <property type="molecule type" value="Genomic_DNA"/>
</dbReference>
<dbReference type="EMBL" id="AJ556629">
    <property type="protein sequence ID" value="CAD89194.1"/>
    <property type="molecule type" value="Genomic_DNA"/>
</dbReference>
<dbReference type="EMBL" id="AJ556630">
    <property type="protein sequence ID" value="CAD89195.1"/>
    <property type="molecule type" value="Genomic_DNA"/>
</dbReference>
<dbReference type="EMBL" id="AJ556631">
    <property type="protein sequence ID" value="CAD89196.1"/>
    <property type="molecule type" value="Genomic_DNA"/>
</dbReference>
<dbReference type="EMBL" id="AJ556632">
    <property type="protein sequence ID" value="CAD89197.1"/>
    <property type="molecule type" value="Genomic_DNA"/>
</dbReference>
<dbReference type="EMBL" id="AJ556633">
    <property type="protein sequence ID" value="CAD89198.1"/>
    <property type="molecule type" value="Genomic_DNA"/>
</dbReference>
<dbReference type="EMBL" id="AE014296">
    <property type="protein sequence ID" value="AAF50530.1"/>
    <property type="molecule type" value="Genomic_DNA"/>
</dbReference>
<dbReference type="RefSeq" id="NP_648145.1">
    <property type="nucleotide sequence ID" value="NM_139888.3"/>
</dbReference>
<dbReference type="PDB" id="2RKQ">
    <property type="method" value="X-ray"/>
    <property type="resolution" value="1.50 A"/>
    <property type="chains" value="A=19-186"/>
</dbReference>
<dbReference type="PDBsum" id="2RKQ"/>
<dbReference type="SMR" id="Q9VS97"/>
<dbReference type="BioGRID" id="64291">
    <property type="interactions" value="7"/>
</dbReference>
<dbReference type="DIP" id="DIP-60774N"/>
<dbReference type="FunCoup" id="Q9VS97">
    <property type="interactions" value="82"/>
</dbReference>
<dbReference type="IntAct" id="Q9VS97">
    <property type="interactions" value="1"/>
</dbReference>
<dbReference type="STRING" id="7227.FBpp0076519"/>
<dbReference type="GlyCosmos" id="Q9VS97">
    <property type="glycosylation" value="1 site, No reported glycans"/>
</dbReference>
<dbReference type="GlyGen" id="Q9VS97">
    <property type="glycosylation" value="1 site"/>
</dbReference>
<dbReference type="PaxDb" id="7227-FBpp0076519"/>
<dbReference type="EnsemblMetazoa" id="FBtr0076807">
    <property type="protein sequence ID" value="FBpp0076519"/>
    <property type="gene ID" value="FBgn0035806"/>
</dbReference>
<dbReference type="GeneID" id="38858"/>
<dbReference type="KEGG" id="dme:Dmel_CG7496"/>
<dbReference type="AGR" id="FB:FBgn0035806"/>
<dbReference type="CTD" id="38858"/>
<dbReference type="FlyBase" id="FBgn0035806">
    <property type="gene designation" value="PGRP-SD"/>
</dbReference>
<dbReference type="VEuPathDB" id="VectorBase:FBgn0035806"/>
<dbReference type="eggNOG" id="ENOG502S2KY">
    <property type="taxonomic scope" value="Eukaryota"/>
</dbReference>
<dbReference type="GeneTree" id="ENSGT00940000166535"/>
<dbReference type="HOGENOM" id="CLU_037559_3_2_1"/>
<dbReference type="InParanoid" id="Q9VS97"/>
<dbReference type="OMA" id="HYLIGGN"/>
<dbReference type="OrthoDB" id="10001926at2759"/>
<dbReference type="PhylomeDB" id="Q9VS97"/>
<dbReference type="BioGRID-ORCS" id="38858">
    <property type="hits" value="0 hits in 3 CRISPR screens"/>
</dbReference>
<dbReference type="EvolutionaryTrace" id="Q9VS97"/>
<dbReference type="GenomeRNAi" id="38858"/>
<dbReference type="PRO" id="PR:Q9VS97"/>
<dbReference type="Proteomes" id="UP000000803">
    <property type="component" value="Chromosome 3L"/>
</dbReference>
<dbReference type="Bgee" id="FBgn0035806">
    <property type="expression patterns" value="Expressed in head capsule and 52 other cell types or tissues"/>
</dbReference>
<dbReference type="ExpressionAtlas" id="Q9VS97">
    <property type="expression patterns" value="baseline and differential"/>
</dbReference>
<dbReference type="GO" id="GO:0005576">
    <property type="term" value="C:extracellular region"/>
    <property type="evidence" value="ECO:0000314"/>
    <property type="project" value="UniProtKB"/>
</dbReference>
<dbReference type="GO" id="GO:0005615">
    <property type="term" value="C:extracellular space"/>
    <property type="evidence" value="ECO:0000314"/>
    <property type="project" value="FlyBase"/>
</dbReference>
<dbReference type="GO" id="GO:0042834">
    <property type="term" value="F:peptidoglycan binding"/>
    <property type="evidence" value="ECO:0000314"/>
    <property type="project" value="FlyBase"/>
</dbReference>
<dbReference type="GO" id="GO:0008270">
    <property type="term" value="F:zinc ion binding"/>
    <property type="evidence" value="ECO:0007669"/>
    <property type="project" value="InterPro"/>
</dbReference>
<dbReference type="GO" id="GO:0050829">
    <property type="term" value="P:defense response to Gram-negative bacterium"/>
    <property type="evidence" value="ECO:0000315"/>
    <property type="project" value="FlyBase"/>
</dbReference>
<dbReference type="GO" id="GO:0050830">
    <property type="term" value="P:defense response to Gram-positive bacterium"/>
    <property type="evidence" value="ECO:0000314"/>
    <property type="project" value="UniProtKB"/>
</dbReference>
<dbReference type="GO" id="GO:0032499">
    <property type="term" value="P:detection of peptidoglycan"/>
    <property type="evidence" value="ECO:0000315"/>
    <property type="project" value="FlyBase"/>
</dbReference>
<dbReference type="GO" id="GO:0045087">
    <property type="term" value="P:innate immune response"/>
    <property type="evidence" value="ECO:0000303"/>
    <property type="project" value="UniProtKB"/>
</dbReference>
<dbReference type="GO" id="GO:0061059">
    <property type="term" value="P:positive regulation of peptidoglycan recognition protein signaling pathway"/>
    <property type="evidence" value="ECO:0000315"/>
    <property type="project" value="FlyBase"/>
</dbReference>
<dbReference type="CDD" id="cd06583">
    <property type="entry name" value="PGRP"/>
    <property type="match status" value="1"/>
</dbReference>
<dbReference type="FunFam" id="3.40.80.10:FF:000001">
    <property type="entry name" value="Peptidoglycan recognition protein 1"/>
    <property type="match status" value="1"/>
</dbReference>
<dbReference type="Gene3D" id="3.40.80.10">
    <property type="entry name" value="Peptidoglycan recognition protein-like"/>
    <property type="match status" value="1"/>
</dbReference>
<dbReference type="InterPro" id="IPR036505">
    <property type="entry name" value="Amidase/PGRP_sf"/>
</dbReference>
<dbReference type="InterPro" id="IPR002502">
    <property type="entry name" value="Amidase_domain"/>
</dbReference>
<dbReference type="InterPro" id="IPR017331">
    <property type="entry name" value="Peptidoglycan_recognition"/>
</dbReference>
<dbReference type="InterPro" id="IPR015510">
    <property type="entry name" value="PGRP"/>
</dbReference>
<dbReference type="InterPro" id="IPR006619">
    <property type="entry name" value="PGRP_domain_met/bac"/>
</dbReference>
<dbReference type="PANTHER" id="PTHR11022">
    <property type="entry name" value="PEPTIDOGLYCAN RECOGNITION PROTEIN"/>
    <property type="match status" value="1"/>
</dbReference>
<dbReference type="PANTHER" id="PTHR11022:SF75">
    <property type="entry name" value="PEPTIDOGLYCAN-RECOGNITION PROTEIN SB1-RELATED"/>
    <property type="match status" value="1"/>
</dbReference>
<dbReference type="Pfam" id="PF01510">
    <property type="entry name" value="Amidase_2"/>
    <property type="match status" value="1"/>
</dbReference>
<dbReference type="PIRSF" id="PIRSF037945">
    <property type="entry name" value="PGRPs"/>
    <property type="match status" value="1"/>
</dbReference>
<dbReference type="SMART" id="SM00644">
    <property type="entry name" value="Ami_2"/>
    <property type="match status" value="1"/>
</dbReference>
<dbReference type="SMART" id="SM00701">
    <property type="entry name" value="PGRP"/>
    <property type="match status" value="1"/>
</dbReference>
<dbReference type="SUPFAM" id="SSF55846">
    <property type="entry name" value="N-acetylmuramoyl-L-alanine amidase-like"/>
    <property type="match status" value="1"/>
</dbReference>
<protein>
    <recommendedName>
        <fullName>Peptidoglycan-recognition protein SD</fullName>
    </recommendedName>
</protein>
<organism>
    <name type="scientific">Drosophila melanogaster</name>
    <name type="common">Fruit fly</name>
    <dbReference type="NCBI Taxonomy" id="7227"/>
    <lineage>
        <taxon>Eukaryota</taxon>
        <taxon>Metazoa</taxon>
        <taxon>Ecdysozoa</taxon>
        <taxon>Arthropoda</taxon>
        <taxon>Hexapoda</taxon>
        <taxon>Insecta</taxon>
        <taxon>Pterygota</taxon>
        <taxon>Neoptera</taxon>
        <taxon>Endopterygota</taxon>
        <taxon>Diptera</taxon>
        <taxon>Brachycera</taxon>
        <taxon>Muscomorpha</taxon>
        <taxon>Ephydroidea</taxon>
        <taxon>Drosophilidae</taxon>
        <taxon>Drosophila</taxon>
        <taxon>Sophophora</taxon>
    </lineage>
</organism>
<feature type="signal peptide" evidence="2">
    <location>
        <begin position="1"/>
        <end position="18"/>
    </location>
</feature>
<feature type="chain" id="PRO_0000023914" description="Peptidoglycan-recognition protein SD">
    <location>
        <begin position="19"/>
        <end position="186"/>
    </location>
</feature>
<feature type="domain" description="N-acetylmuramoyl-L-alanine amidase" evidence="2">
    <location>
        <begin position="47"/>
        <end position="169"/>
    </location>
</feature>
<feature type="glycosylation site" description="N-linked (GlcNAc...) asparagine" evidence="2">
    <location>
        <position position="181"/>
    </location>
</feature>
<feature type="disulfide bond" evidence="1">
    <location>
        <begin position="57"/>
        <end position="63"/>
    </location>
</feature>
<feature type="sequence variant" description="In strain: DI7, Draveil, Loua, Monty5, Tahiti, Texas, S30 and ZW141.">
    <original>E</original>
    <variation>V</variation>
    <location>
        <position position="41"/>
    </location>
</feature>
<feature type="sequence variant" description="In strain: DI7, Draveil, Loua, Monty5, Tahiti, Texas, S30 and ZW141.">
    <original>T</original>
    <variation>A</variation>
    <location>
        <position position="62"/>
    </location>
</feature>
<feature type="sequence variant" description="In strain: DI7, Draveil, Loua, Monty5, Tahiti, Texas, S30 and ZW141.">
    <original>Q</original>
    <variation>R</variation>
    <location>
        <position position="68"/>
    </location>
</feature>
<feature type="sequence variant" description="In strain: Loua, Monty5, P. bourg, Tahiti, Texas and S30.">
    <original>S</original>
    <variation>F</variation>
    <location>
        <position position="183"/>
    </location>
</feature>
<feature type="helix" evidence="7">
    <location>
        <begin position="26"/>
        <end position="28"/>
    </location>
</feature>
<feature type="strand" evidence="7">
    <location>
        <begin position="42"/>
        <end position="51"/>
    </location>
</feature>
<feature type="helix" evidence="7">
    <location>
        <begin position="60"/>
        <end position="76"/>
    </location>
</feature>
<feature type="strand" evidence="7">
    <location>
        <begin position="86"/>
        <end position="89"/>
    </location>
</feature>
<feature type="strand" evidence="7">
    <location>
        <begin position="95"/>
        <end position="97"/>
    </location>
</feature>
<feature type="strand" evidence="7">
    <location>
        <begin position="106"/>
        <end position="108"/>
    </location>
</feature>
<feature type="helix" evidence="7">
    <location>
        <begin position="109"/>
        <end position="111"/>
    </location>
</feature>
<feature type="strand" evidence="7">
    <location>
        <begin position="115"/>
        <end position="122"/>
    </location>
</feature>
<feature type="strand" evidence="7">
    <location>
        <begin position="125"/>
        <end position="127"/>
    </location>
</feature>
<feature type="helix" evidence="7">
    <location>
        <begin position="131"/>
        <end position="146"/>
    </location>
</feature>
<feature type="strand" evidence="7">
    <location>
        <begin position="149"/>
        <end position="158"/>
    </location>
</feature>
<feature type="helix" evidence="7">
    <location>
        <begin position="159"/>
        <end position="161"/>
    </location>
</feature>
<feature type="strand" evidence="7">
    <location>
        <begin position="163"/>
        <end position="165"/>
    </location>
</feature>
<feature type="helix" evidence="7">
    <location>
        <begin position="170"/>
        <end position="176"/>
    </location>
</feature>
<name>PGPSD_DROME</name>
<proteinExistence type="evidence at protein level"/>
<gene>
    <name type="primary">PGRP-SD</name>
    <name type="ORF">CG7496</name>
</gene>
<comment type="function">
    <text evidence="5">Peptidoglycan-recognition protein that plays a key role in innate immunity by binding to peptidoglycans (PGN) of Gram-positive bacteria and activating the Toll pathway. Has no activity against on Gram-negative bacteria and fungi. Shows some partial redundancy with PRPGP-SA in Gram-positive bacteria recognition. May act by activating the proteolytic cleavage of Spatzle and the subsequent activation of Toll pathway. Recognizes S.aureus PGN.</text>
</comment>
<comment type="interaction">
    <interactant intactId="EBI-15721196">
        <id>Q9VS97</id>
    </interactant>
    <interactant intactId="EBI-15721168">
        <id>Q9NHB0</id>
        <label>GNBP1</label>
    </interactant>
    <organismsDiffer>false</organismsDiffer>
    <experiments>4</experiments>
</comment>
<comment type="subcellular location">
    <subcellularLocation>
        <location evidence="6">Secreted</location>
    </subcellularLocation>
</comment>
<comment type="tissue specificity">
    <text evidence="3">In larvae, it is mainly expressed in fat body. Also expressed in uninduced hemocytes and mbn-2 cells.</text>
</comment>
<comment type="developmental stage">
    <text evidence="3">Expressed from old embryos. Expressed in larvae and adults.</text>
</comment>
<comment type="induction">
    <text evidence="3 4">Strongly up-regulated by PGN from B.subtilis. Weakly or not expressed in normal conditions. Regulated by the imd/Relish pathway.</text>
</comment>
<comment type="similarity">
    <text evidence="6">Belongs to the N-acetylmuramoyl-L-alanine amidase 2 family.</text>
</comment>
<reference key="1">
    <citation type="journal article" date="2003" name="J. Mol. Evol.">
        <title>The evolution of parasite recognition genes in the innate immune system: purifying selection on Drosophila melanogaster peptidoglycan recognition proteins.</title>
        <authorList>
            <person name="Jiggins F.M."/>
            <person name="Hurst G.D.D."/>
        </authorList>
    </citation>
    <scope>NUCLEOTIDE SEQUENCE [GENOMIC DNA]</scope>
    <source>
        <strain>DI7</strain>
        <strain>Draveil</strain>
        <strain>KY024</strain>
        <strain>KY038</strain>
        <strain>Loua</strain>
        <strain>Monty5</strain>
        <strain>P.bourg</strain>
        <strain>S30</strain>
        <strain>Tahiti</strain>
        <strain>Texas</strain>
        <strain>ZW141</strain>
    </source>
</reference>
<reference key="2">
    <citation type="journal article" date="2000" name="Science">
        <title>The genome sequence of Drosophila melanogaster.</title>
        <authorList>
            <person name="Adams M.D."/>
            <person name="Celniker S.E."/>
            <person name="Holt R.A."/>
            <person name="Evans C.A."/>
            <person name="Gocayne J.D."/>
            <person name="Amanatides P.G."/>
            <person name="Scherer S.E."/>
            <person name="Li P.W."/>
            <person name="Hoskins R.A."/>
            <person name="Galle R.F."/>
            <person name="George R.A."/>
            <person name="Lewis S.E."/>
            <person name="Richards S."/>
            <person name="Ashburner M."/>
            <person name="Henderson S.N."/>
            <person name="Sutton G.G."/>
            <person name="Wortman J.R."/>
            <person name="Yandell M.D."/>
            <person name="Zhang Q."/>
            <person name="Chen L.X."/>
            <person name="Brandon R.C."/>
            <person name="Rogers Y.-H.C."/>
            <person name="Blazej R.G."/>
            <person name="Champe M."/>
            <person name="Pfeiffer B.D."/>
            <person name="Wan K.H."/>
            <person name="Doyle C."/>
            <person name="Baxter E.G."/>
            <person name="Helt G."/>
            <person name="Nelson C.R."/>
            <person name="Miklos G.L.G."/>
            <person name="Abril J.F."/>
            <person name="Agbayani A."/>
            <person name="An H.-J."/>
            <person name="Andrews-Pfannkoch C."/>
            <person name="Baldwin D."/>
            <person name="Ballew R.M."/>
            <person name="Basu A."/>
            <person name="Baxendale J."/>
            <person name="Bayraktaroglu L."/>
            <person name="Beasley E.M."/>
            <person name="Beeson K.Y."/>
            <person name="Benos P.V."/>
            <person name="Berman B.P."/>
            <person name="Bhandari D."/>
            <person name="Bolshakov S."/>
            <person name="Borkova D."/>
            <person name="Botchan M.R."/>
            <person name="Bouck J."/>
            <person name="Brokstein P."/>
            <person name="Brottier P."/>
            <person name="Burtis K.C."/>
            <person name="Busam D.A."/>
            <person name="Butler H."/>
            <person name="Cadieu E."/>
            <person name="Center A."/>
            <person name="Chandra I."/>
            <person name="Cherry J.M."/>
            <person name="Cawley S."/>
            <person name="Dahlke C."/>
            <person name="Davenport L.B."/>
            <person name="Davies P."/>
            <person name="de Pablos B."/>
            <person name="Delcher A."/>
            <person name="Deng Z."/>
            <person name="Mays A.D."/>
            <person name="Dew I."/>
            <person name="Dietz S.M."/>
            <person name="Dodson K."/>
            <person name="Doup L.E."/>
            <person name="Downes M."/>
            <person name="Dugan-Rocha S."/>
            <person name="Dunkov B.C."/>
            <person name="Dunn P."/>
            <person name="Durbin K.J."/>
            <person name="Evangelista C.C."/>
            <person name="Ferraz C."/>
            <person name="Ferriera S."/>
            <person name="Fleischmann W."/>
            <person name="Fosler C."/>
            <person name="Gabrielian A.E."/>
            <person name="Garg N.S."/>
            <person name="Gelbart W.M."/>
            <person name="Glasser K."/>
            <person name="Glodek A."/>
            <person name="Gong F."/>
            <person name="Gorrell J.H."/>
            <person name="Gu Z."/>
            <person name="Guan P."/>
            <person name="Harris M."/>
            <person name="Harris N.L."/>
            <person name="Harvey D.A."/>
            <person name="Heiman T.J."/>
            <person name="Hernandez J.R."/>
            <person name="Houck J."/>
            <person name="Hostin D."/>
            <person name="Houston K.A."/>
            <person name="Howland T.J."/>
            <person name="Wei M.-H."/>
            <person name="Ibegwam C."/>
            <person name="Jalali M."/>
            <person name="Kalush F."/>
            <person name="Karpen G.H."/>
            <person name="Ke Z."/>
            <person name="Kennison J.A."/>
            <person name="Ketchum K.A."/>
            <person name="Kimmel B.E."/>
            <person name="Kodira C.D."/>
            <person name="Kraft C.L."/>
            <person name="Kravitz S."/>
            <person name="Kulp D."/>
            <person name="Lai Z."/>
            <person name="Lasko P."/>
            <person name="Lei Y."/>
            <person name="Levitsky A.A."/>
            <person name="Li J.H."/>
            <person name="Li Z."/>
            <person name="Liang Y."/>
            <person name="Lin X."/>
            <person name="Liu X."/>
            <person name="Mattei B."/>
            <person name="McIntosh T.C."/>
            <person name="McLeod M.P."/>
            <person name="McPherson D."/>
            <person name="Merkulov G."/>
            <person name="Milshina N.V."/>
            <person name="Mobarry C."/>
            <person name="Morris J."/>
            <person name="Moshrefi A."/>
            <person name="Mount S.M."/>
            <person name="Moy M."/>
            <person name="Murphy B."/>
            <person name="Murphy L."/>
            <person name="Muzny D.M."/>
            <person name="Nelson D.L."/>
            <person name="Nelson D.R."/>
            <person name="Nelson K.A."/>
            <person name="Nixon K."/>
            <person name="Nusskern D.R."/>
            <person name="Pacleb J.M."/>
            <person name="Palazzolo M."/>
            <person name="Pittman G.S."/>
            <person name="Pan S."/>
            <person name="Pollard J."/>
            <person name="Puri V."/>
            <person name="Reese M.G."/>
            <person name="Reinert K."/>
            <person name="Remington K."/>
            <person name="Saunders R.D.C."/>
            <person name="Scheeler F."/>
            <person name="Shen H."/>
            <person name="Shue B.C."/>
            <person name="Siden-Kiamos I."/>
            <person name="Simpson M."/>
            <person name="Skupski M.P."/>
            <person name="Smith T.J."/>
            <person name="Spier E."/>
            <person name="Spradling A.C."/>
            <person name="Stapleton M."/>
            <person name="Strong R."/>
            <person name="Sun E."/>
            <person name="Svirskas R."/>
            <person name="Tector C."/>
            <person name="Turner R."/>
            <person name="Venter E."/>
            <person name="Wang A.H."/>
            <person name="Wang X."/>
            <person name="Wang Z.-Y."/>
            <person name="Wassarman D.A."/>
            <person name="Weinstock G.M."/>
            <person name="Weissenbach J."/>
            <person name="Williams S.M."/>
            <person name="Woodage T."/>
            <person name="Worley K.C."/>
            <person name="Wu D."/>
            <person name="Yang S."/>
            <person name="Yao Q.A."/>
            <person name="Ye J."/>
            <person name="Yeh R.-F."/>
            <person name="Zaveri J.S."/>
            <person name="Zhan M."/>
            <person name="Zhang G."/>
            <person name="Zhao Q."/>
            <person name="Zheng L."/>
            <person name="Zheng X.H."/>
            <person name="Zhong F.N."/>
            <person name="Zhong W."/>
            <person name="Zhou X."/>
            <person name="Zhu S.C."/>
            <person name="Zhu X."/>
            <person name="Smith H.O."/>
            <person name="Gibbs R.A."/>
            <person name="Myers E.W."/>
            <person name="Rubin G.M."/>
            <person name="Venter J.C."/>
        </authorList>
    </citation>
    <scope>NUCLEOTIDE SEQUENCE [LARGE SCALE GENOMIC DNA]</scope>
    <source>
        <strain>Berkeley</strain>
    </source>
</reference>
<reference key="3">
    <citation type="journal article" date="2002" name="Genome Biol.">
        <title>Annotation of the Drosophila melanogaster euchromatic genome: a systematic review.</title>
        <authorList>
            <person name="Misra S."/>
            <person name="Crosby M.A."/>
            <person name="Mungall C.J."/>
            <person name="Matthews B.B."/>
            <person name="Campbell K.S."/>
            <person name="Hradecky P."/>
            <person name="Huang Y."/>
            <person name="Kaminker J.S."/>
            <person name="Millburn G.H."/>
            <person name="Prochnik S.E."/>
            <person name="Smith C.D."/>
            <person name="Tupy J.L."/>
            <person name="Whitfield E.J."/>
            <person name="Bayraktaroglu L."/>
            <person name="Berman B.P."/>
            <person name="Bettencourt B.R."/>
            <person name="Celniker S.E."/>
            <person name="de Grey A.D.N.J."/>
            <person name="Drysdale R.A."/>
            <person name="Harris N.L."/>
            <person name="Richter J."/>
            <person name="Russo S."/>
            <person name="Schroeder A.J."/>
            <person name="Shu S.Q."/>
            <person name="Stapleton M."/>
            <person name="Yamada C."/>
            <person name="Ashburner M."/>
            <person name="Gelbart W.M."/>
            <person name="Rubin G.M."/>
            <person name="Lewis S.E."/>
        </authorList>
    </citation>
    <scope>GENOME REANNOTATION</scope>
    <source>
        <strain>Berkeley</strain>
    </source>
</reference>
<reference key="4">
    <citation type="journal article" date="2000" name="Proc. Natl. Acad. Sci. U.S.A.">
        <title>A family of peptidoglycan recognition proteins in the fruit fly Drosophila melanogaster.</title>
        <authorList>
            <person name="Werner T."/>
            <person name="Liu G."/>
            <person name="Kang D."/>
            <person name="Ekengren S."/>
            <person name="Steiner H."/>
            <person name="Hultmark D."/>
        </authorList>
    </citation>
    <scope>TISSUE SPECIFICITY</scope>
    <scope>DEVELOPMENTAL STAGE</scope>
    <scope>INDUCTION</scope>
</reference>
<reference key="5">
    <citation type="journal article" date="2002" name="EMBO J.">
        <title>The Toll and Imd pathways are the major regulators of the immune response in Drosophila.</title>
        <authorList>
            <person name="De Gregorio E."/>
            <person name="Spellman P.T."/>
            <person name="Tzou P."/>
            <person name="Rubin G.M."/>
            <person name="Lemaitre B."/>
        </authorList>
    </citation>
    <scope>INDUCTION</scope>
</reference>
<reference key="6">
    <citation type="journal article" date="2004" name="Nat. Immunol.">
        <title>Function of the Drosophila pattern-recognition receptor PGRP-SD in the detection of Gram-positive bacteria.</title>
        <authorList>
            <person name="Bischoff V."/>
            <person name="Vignal C."/>
            <person name="Boneca I.G."/>
            <person name="Michel T."/>
            <person name="Hoffmann J.A."/>
            <person name="Royet J."/>
        </authorList>
    </citation>
    <scope>FUNCTION</scope>
</reference>